<protein>
    <recommendedName>
        <fullName>Altered inheritance of mitochondria protein 9, mitochondrial</fullName>
    </recommendedName>
    <alternativeName>
        <fullName>Found in mitochondrial proteome protein 29</fullName>
    </alternativeName>
</protein>
<keyword id="KW-0496">Mitochondrion</keyword>
<keyword id="KW-1185">Reference proteome</keyword>
<keyword id="KW-0809">Transit peptide</keyword>
<feature type="transit peptide" description="Mitochondrion" evidence="2">
    <location>
        <begin position="1"/>
        <end position="34"/>
    </location>
</feature>
<feature type="chain" id="PRO_0000408716" description="Altered inheritance of mitochondria protein 9, mitochondrial">
    <location>
        <begin position="35"/>
        <end position="624"/>
    </location>
</feature>
<name>AIM9_CANAL</name>
<comment type="subcellular location">
    <subcellularLocation>
        <location evidence="1">Mitochondrion</location>
    </subcellularLocation>
</comment>
<comment type="similarity">
    <text evidence="3">Belongs to the AIM9 family.</text>
</comment>
<accession>Q5A922</accession>
<accession>A0A1D8PCF8</accession>
<proteinExistence type="inferred from homology"/>
<evidence type="ECO:0000250" key="1"/>
<evidence type="ECO:0000255" key="2"/>
<evidence type="ECO:0000305" key="3"/>
<reference key="1">
    <citation type="journal article" date="2004" name="Proc. Natl. Acad. Sci. U.S.A.">
        <title>The diploid genome sequence of Candida albicans.</title>
        <authorList>
            <person name="Jones T."/>
            <person name="Federspiel N.A."/>
            <person name="Chibana H."/>
            <person name="Dungan J."/>
            <person name="Kalman S."/>
            <person name="Magee B.B."/>
            <person name="Newport G."/>
            <person name="Thorstenson Y.R."/>
            <person name="Agabian N."/>
            <person name="Magee P.T."/>
            <person name="Davis R.W."/>
            <person name="Scherer S."/>
        </authorList>
    </citation>
    <scope>NUCLEOTIDE SEQUENCE [LARGE SCALE GENOMIC DNA]</scope>
    <source>
        <strain>SC5314 / ATCC MYA-2876</strain>
    </source>
</reference>
<reference key="2">
    <citation type="journal article" date="2007" name="Genome Biol.">
        <title>Assembly of the Candida albicans genome into sixteen supercontigs aligned on the eight chromosomes.</title>
        <authorList>
            <person name="van het Hoog M."/>
            <person name="Rast T.J."/>
            <person name="Martchenko M."/>
            <person name="Grindle S."/>
            <person name="Dignard D."/>
            <person name="Hogues H."/>
            <person name="Cuomo C."/>
            <person name="Berriman M."/>
            <person name="Scherer S."/>
            <person name="Magee B.B."/>
            <person name="Whiteway M."/>
            <person name="Chibana H."/>
            <person name="Nantel A."/>
            <person name="Magee P.T."/>
        </authorList>
    </citation>
    <scope>GENOME REANNOTATION</scope>
    <source>
        <strain>SC5314 / ATCC MYA-2876</strain>
    </source>
</reference>
<reference key="3">
    <citation type="journal article" date="2013" name="Genome Biol.">
        <title>Assembly of a phased diploid Candida albicans genome facilitates allele-specific measurements and provides a simple model for repeat and indel structure.</title>
        <authorList>
            <person name="Muzzey D."/>
            <person name="Schwartz K."/>
            <person name="Weissman J.S."/>
            <person name="Sherlock G."/>
        </authorList>
    </citation>
    <scope>NUCLEOTIDE SEQUENCE [LARGE SCALE GENOMIC DNA]</scope>
    <scope>GENOME REANNOTATION</scope>
    <source>
        <strain>SC5314 / ATCC MYA-2876</strain>
    </source>
</reference>
<organism>
    <name type="scientific">Candida albicans (strain SC5314 / ATCC MYA-2876)</name>
    <name type="common">Yeast</name>
    <dbReference type="NCBI Taxonomy" id="237561"/>
    <lineage>
        <taxon>Eukaryota</taxon>
        <taxon>Fungi</taxon>
        <taxon>Dikarya</taxon>
        <taxon>Ascomycota</taxon>
        <taxon>Saccharomycotina</taxon>
        <taxon>Pichiomycetes</taxon>
        <taxon>Debaryomycetaceae</taxon>
        <taxon>Candida/Lodderomyces clade</taxon>
        <taxon>Candida</taxon>
    </lineage>
</organism>
<dbReference type="EMBL" id="CP017623">
    <property type="protein sequence ID" value="AOW25819.1"/>
    <property type="molecule type" value="Genomic_DNA"/>
</dbReference>
<dbReference type="RefSeq" id="XP_718135.2">
    <property type="nucleotide sequence ID" value="XM_713042.2"/>
</dbReference>
<dbReference type="FunCoup" id="Q5A922">
    <property type="interactions" value="27"/>
</dbReference>
<dbReference type="STRING" id="237561.Q5A922"/>
<dbReference type="EnsemblFungi" id="C1_01250W_A-T">
    <property type="protein sequence ID" value="C1_01250W_A-T-p1"/>
    <property type="gene ID" value="C1_01250W_A"/>
</dbReference>
<dbReference type="GeneID" id="3640212"/>
<dbReference type="KEGG" id="cal:CAALFM_C101250WA"/>
<dbReference type="CGD" id="CAL0000200375">
    <property type="gene designation" value="orf19.10822"/>
</dbReference>
<dbReference type="VEuPathDB" id="FungiDB:C1_01250W_A"/>
<dbReference type="eggNOG" id="ENOG502QV1E">
    <property type="taxonomic scope" value="Eukaryota"/>
</dbReference>
<dbReference type="HOGENOM" id="CLU_019189_0_1_1"/>
<dbReference type="InParanoid" id="Q5A922"/>
<dbReference type="OrthoDB" id="2968323at2759"/>
<dbReference type="PRO" id="PR:Q5A922"/>
<dbReference type="Proteomes" id="UP000000559">
    <property type="component" value="Chromosome 1"/>
</dbReference>
<dbReference type="GO" id="GO:0005739">
    <property type="term" value="C:mitochondrion"/>
    <property type="evidence" value="ECO:0007669"/>
    <property type="project" value="UniProtKB-SubCell"/>
</dbReference>
<dbReference type="Gene3D" id="3.30.200.20">
    <property type="entry name" value="Phosphorylase Kinase, domain 1"/>
    <property type="match status" value="1"/>
</dbReference>
<dbReference type="InterPro" id="IPR002575">
    <property type="entry name" value="Aminoglycoside_PTrfase"/>
</dbReference>
<dbReference type="InterPro" id="IPR011009">
    <property type="entry name" value="Kinase-like_dom_sf"/>
</dbReference>
<dbReference type="InterPro" id="IPR051035">
    <property type="entry name" value="Mito_inheritance_9"/>
</dbReference>
<dbReference type="PANTHER" id="PTHR36091">
    <property type="entry name" value="ALTERED INHERITANCE OF MITOCHONDRIA PROTEIN 9, MITOCHONDRIAL"/>
    <property type="match status" value="1"/>
</dbReference>
<dbReference type="PANTHER" id="PTHR36091:SF1">
    <property type="entry name" value="ALTERED INHERITANCE OF MITOCHONDRIA PROTEIN 9, MITOCHONDRIAL"/>
    <property type="match status" value="1"/>
</dbReference>
<dbReference type="Pfam" id="PF01636">
    <property type="entry name" value="APH"/>
    <property type="match status" value="1"/>
</dbReference>
<dbReference type="SUPFAM" id="SSF56112">
    <property type="entry name" value="Protein kinase-like (PK-like)"/>
    <property type="match status" value="1"/>
</dbReference>
<gene>
    <name type="primary">AIM9</name>
    <name type="synonym">FMP29</name>
    <name type="ordered locus">CAALFM_C101250WA</name>
    <name type="ORF">CaO19.10822</name>
    <name type="ORF">CaO19.3312</name>
</gene>
<sequence length="624" mass="71466">MLSRVARCSRTLNQVTRNGQSGLFSAVLRTSIRQNSTDSPASNNANEIYTKLSDTKDPQRNQFFQYTWGSWLTNDKSKKKQRETTFSIEGLTLFIDRINQLESKLAQPKSLEGAFVLANNKELLGSTKDKVIVRSIASIHEGKHHRVYKITLNTGKELVLRIPYKLDSDVAIASKLKSEVATTDFLKLKLGLNVPRVLAYGVDSNNEIKSPFILQEFISGELLMKKWHPLLPDSEETNKRLHEVIDPIAQFQNKILSVTFNKFGSLYFHDDVEGSLQNDVPYEGETDSALSNRWRIGPSVERQFTRNKNKLQQSIIDQYNGPWDASNPTAVLESVADIELENAKSKLSLINADAGANENDRALITKQIKTFENLKKISPQLINDKSKSIMNVEELFKPRLYIPDLDPLNVIQHSETENYFIDFEGSTIKPFILTSYPKFVAYQGAKIYNLEEDVPGYKEMEELEKQQYEFMYYKTRNERMWEFELNKYRHDLIAIASPHIKVLKSPYLQALDVKNGKDYLYVEGSIVQLQAMWEAYVANELVNSKDTKFPIEYTAEYLDQHQQELSDYQLETVSSPFSATGGWIPQDMFDTLKAQGILVETKDGNYKVETEKVLENPPAQPEEK</sequence>